<accession>Q8FT39</accession>
<comment type="function">
    <text evidence="1">Catalyzes the condensation of carbamoyl phosphate and aspartate to form carbamoyl aspartate and inorganic phosphate, the committed step in the de novo pyrimidine nucleotide biosynthesis pathway.</text>
</comment>
<comment type="catalytic activity">
    <reaction evidence="1">
        <text>carbamoyl phosphate + L-aspartate = N-carbamoyl-L-aspartate + phosphate + H(+)</text>
        <dbReference type="Rhea" id="RHEA:20013"/>
        <dbReference type="ChEBI" id="CHEBI:15378"/>
        <dbReference type="ChEBI" id="CHEBI:29991"/>
        <dbReference type="ChEBI" id="CHEBI:32814"/>
        <dbReference type="ChEBI" id="CHEBI:43474"/>
        <dbReference type="ChEBI" id="CHEBI:58228"/>
        <dbReference type="EC" id="2.1.3.2"/>
    </reaction>
</comment>
<comment type="pathway">
    <text evidence="1">Pyrimidine metabolism; UMP biosynthesis via de novo pathway; (S)-dihydroorotate from bicarbonate: step 2/3.</text>
</comment>
<comment type="subunit">
    <text evidence="1">Heterododecamer (2C3:3R2) of six catalytic PyrB chains organized as two trimers (C3), and six regulatory PyrI chains organized as three dimers (R2).</text>
</comment>
<comment type="similarity">
    <text evidence="1">Belongs to the aspartate/ornithine carbamoyltransferase superfamily. ATCase family.</text>
</comment>
<comment type="sequence caution" evidence="2">
    <conflict type="erroneous initiation">
        <sequence resource="EMBL-CDS" id="BAC18542"/>
    </conflict>
</comment>
<name>PYRB_COREF</name>
<keyword id="KW-0665">Pyrimidine biosynthesis</keyword>
<keyword id="KW-1185">Reference proteome</keyword>
<keyword id="KW-0808">Transferase</keyword>
<reference key="1">
    <citation type="journal article" date="2003" name="Genome Res.">
        <title>Comparative complete genome sequence analysis of the amino acid replacements responsible for the thermostability of Corynebacterium efficiens.</title>
        <authorList>
            <person name="Nishio Y."/>
            <person name="Nakamura Y."/>
            <person name="Kawarabayasi Y."/>
            <person name="Usuda Y."/>
            <person name="Kimura E."/>
            <person name="Sugimoto S."/>
            <person name="Matsui K."/>
            <person name="Yamagishi A."/>
            <person name="Kikuchi H."/>
            <person name="Ikeo K."/>
            <person name="Gojobori T."/>
        </authorList>
    </citation>
    <scope>NUCLEOTIDE SEQUENCE [LARGE SCALE GENOMIC DNA]</scope>
    <source>
        <strain>DSM 44549 / YS-314 / AJ 12310 / JCM 11189 / NBRC 100395</strain>
    </source>
</reference>
<dbReference type="EC" id="2.1.3.2" evidence="1"/>
<dbReference type="EMBL" id="BA000035">
    <property type="protein sequence ID" value="BAC18542.1"/>
    <property type="status" value="ALT_INIT"/>
    <property type="molecule type" value="Genomic_DNA"/>
</dbReference>
<dbReference type="RefSeq" id="WP_006767732.1">
    <property type="nucleotide sequence ID" value="NC_004369.1"/>
</dbReference>
<dbReference type="SMR" id="Q8FT39"/>
<dbReference type="STRING" id="196164.gene:10742153"/>
<dbReference type="KEGG" id="cef:CE1732"/>
<dbReference type="eggNOG" id="COG0540">
    <property type="taxonomic scope" value="Bacteria"/>
</dbReference>
<dbReference type="HOGENOM" id="CLU_043846_2_0_11"/>
<dbReference type="OrthoDB" id="9774690at2"/>
<dbReference type="UniPathway" id="UPA00070">
    <property type="reaction ID" value="UER00116"/>
</dbReference>
<dbReference type="Proteomes" id="UP000001409">
    <property type="component" value="Chromosome"/>
</dbReference>
<dbReference type="GO" id="GO:0005829">
    <property type="term" value="C:cytosol"/>
    <property type="evidence" value="ECO:0007669"/>
    <property type="project" value="TreeGrafter"/>
</dbReference>
<dbReference type="GO" id="GO:0016597">
    <property type="term" value="F:amino acid binding"/>
    <property type="evidence" value="ECO:0007669"/>
    <property type="project" value="InterPro"/>
</dbReference>
<dbReference type="GO" id="GO:0004070">
    <property type="term" value="F:aspartate carbamoyltransferase activity"/>
    <property type="evidence" value="ECO:0007669"/>
    <property type="project" value="UniProtKB-UniRule"/>
</dbReference>
<dbReference type="GO" id="GO:0006207">
    <property type="term" value="P:'de novo' pyrimidine nucleobase biosynthetic process"/>
    <property type="evidence" value="ECO:0007669"/>
    <property type="project" value="InterPro"/>
</dbReference>
<dbReference type="GO" id="GO:0044205">
    <property type="term" value="P:'de novo' UMP biosynthetic process"/>
    <property type="evidence" value="ECO:0007669"/>
    <property type="project" value="UniProtKB-UniRule"/>
</dbReference>
<dbReference type="GO" id="GO:0006520">
    <property type="term" value="P:amino acid metabolic process"/>
    <property type="evidence" value="ECO:0007669"/>
    <property type="project" value="InterPro"/>
</dbReference>
<dbReference type="FunFam" id="3.40.50.1370:FF:000007">
    <property type="entry name" value="Aspartate carbamoyltransferase"/>
    <property type="match status" value="1"/>
</dbReference>
<dbReference type="Gene3D" id="3.40.50.1370">
    <property type="entry name" value="Aspartate/ornithine carbamoyltransferase"/>
    <property type="match status" value="2"/>
</dbReference>
<dbReference type="HAMAP" id="MF_00001">
    <property type="entry name" value="Asp_carb_tr"/>
    <property type="match status" value="1"/>
</dbReference>
<dbReference type="InterPro" id="IPR006132">
    <property type="entry name" value="Asp/Orn_carbamoyltranf_P-bd"/>
</dbReference>
<dbReference type="InterPro" id="IPR006130">
    <property type="entry name" value="Asp/Orn_carbamoylTrfase"/>
</dbReference>
<dbReference type="InterPro" id="IPR036901">
    <property type="entry name" value="Asp/Orn_carbamoylTrfase_sf"/>
</dbReference>
<dbReference type="InterPro" id="IPR002082">
    <property type="entry name" value="Asp_carbamoyltransf"/>
</dbReference>
<dbReference type="InterPro" id="IPR006131">
    <property type="entry name" value="Asp_carbamoyltransf_Asp/Orn-bd"/>
</dbReference>
<dbReference type="NCBIfam" id="TIGR00670">
    <property type="entry name" value="asp_carb_tr"/>
    <property type="match status" value="1"/>
</dbReference>
<dbReference type="NCBIfam" id="NF002032">
    <property type="entry name" value="PRK00856.1"/>
    <property type="match status" value="1"/>
</dbReference>
<dbReference type="PANTHER" id="PTHR45753:SF6">
    <property type="entry name" value="ASPARTATE CARBAMOYLTRANSFERASE"/>
    <property type="match status" value="1"/>
</dbReference>
<dbReference type="PANTHER" id="PTHR45753">
    <property type="entry name" value="ORNITHINE CARBAMOYLTRANSFERASE, MITOCHONDRIAL"/>
    <property type="match status" value="1"/>
</dbReference>
<dbReference type="Pfam" id="PF00185">
    <property type="entry name" value="OTCace"/>
    <property type="match status" value="1"/>
</dbReference>
<dbReference type="Pfam" id="PF02729">
    <property type="entry name" value="OTCace_N"/>
    <property type="match status" value="1"/>
</dbReference>
<dbReference type="PRINTS" id="PR00100">
    <property type="entry name" value="AOTCASE"/>
</dbReference>
<dbReference type="PRINTS" id="PR00101">
    <property type="entry name" value="ATCASE"/>
</dbReference>
<dbReference type="SUPFAM" id="SSF53671">
    <property type="entry name" value="Aspartate/ornithine carbamoyltransferase"/>
    <property type="match status" value="1"/>
</dbReference>
<dbReference type="PROSITE" id="PS00097">
    <property type="entry name" value="CARBAMOYLTRANSFERASE"/>
    <property type="match status" value="1"/>
</dbReference>
<protein>
    <recommendedName>
        <fullName evidence="1">Aspartate carbamoyltransferase catalytic subunit</fullName>
        <ecNumber evidence="1">2.1.3.2</ecNumber>
    </recommendedName>
    <alternativeName>
        <fullName evidence="1">Aspartate transcarbamylase</fullName>
        <shortName evidence="1">ATCase</shortName>
    </alternativeName>
</protein>
<feature type="chain" id="PRO_0000113122" description="Aspartate carbamoyltransferase catalytic subunit">
    <location>
        <begin position="1"/>
        <end position="312"/>
    </location>
</feature>
<feature type="binding site" evidence="1">
    <location>
        <position position="55"/>
    </location>
    <ligand>
        <name>carbamoyl phosphate</name>
        <dbReference type="ChEBI" id="CHEBI:58228"/>
    </ligand>
</feature>
<feature type="binding site" evidence="1">
    <location>
        <position position="56"/>
    </location>
    <ligand>
        <name>carbamoyl phosphate</name>
        <dbReference type="ChEBI" id="CHEBI:58228"/>
    </ligand>
</feature>
<feature type="binding site" evidence="1">
    <location>
        <position position="83"/>
    </location>
    <ligand>
        <name>L-aspartate</name>
        <dbReference type="ChEBI" id="CHEBI:29991"/>
    </ligand>
</feature>
<feature type="binding site" evidence="1">
    <location>
        <position position="105"/>
    </location>
    <ligand>
        <name>carbamoyl phosphate</name>
        <dbReference type="ChEBI" id="CHEBI:58228"/>
    </ligand>
</feature>
<feature type="binding site" evidence="1">
    <location>
        <position position="138"/>
    </location>
    <ligand>
        <name>carbamoyl phosphate</name>
        <dbReference type="ChEBI" id="CHEBI:58228"/>
    </ligand>
</feature>
<feature type="binding site" evidence="1">
    <location>
        <position position="141"/>
    </location>
    <ligand>
        <name>carbamoyl phosphate</name>
        <dbReference type="ChEBI" id="CHEBI:58228"/>
    </ligand>
</feature>
<feature type="binding site" evidence="1">
    <location>
        <position position="171"/>
    </location>
    <ligand>
        <name>L-aspartate</name>
        <dbReference type="ChEBI" id="CHEBI:29991"/>
    </ligand>
</feature>
<feature type="binding site" evidence="1">
    <location>
        <position position="225"/>
    </location>
    <ligand>
        <name>L-aspartate</name>
        <dbReference type="ChEBI" id="CHEBI:29991"/>
    </ligand>
</feature>
<feature type="binding site" evidence="1">
    <location>
        <position position="266"/>
    </location>
    <ligand>
        <name>carbamoyl phosphate</name>
        <dbReference type="ChEBI" id="CHEBI:58228"/>
    </ligand>
</feature>
<feature type="binding site" evidence="1">
    <location>
        <position position="267"/>
    </location>
    <ligand>
        <name>carbamoyl phosphate</name>
        <dbReference type="ChEBI" id="CHEBI:58228"/>
    </ligand>
</feature>
<proteinExistence type="inferred from homology"/>
<organism>
    <name type="scientific">Corynebacterium efficiens (strain DSM 44549 / YS-314 / AJ 12310 / JCM 11189 / NBRC 100395)</name>
    <dbReference type="NCBI Taxonomy" id="196164"/>
    <lineage>
        <taxon>Bacteria</taxon>
        <taxon>Bacillati</taxon>
        <taxon>Actinomycetota</taxon>
        <taxon>Actinomycetes</taxon>
        <taxon>Mycobacteriales</taxon>
        <taxon>Corynebacteriaceae</taxon>
        <taxon>Corynebacterium</taxon>
    </lineage>
</organism>
<gene>
    <name evidence="1" type="primary">pyrB</name>
    <name type="ordered locus">CE1732</name>
</gene>
<sequence>MKHLLSIADLSRDEIISLLDEADRFKEVLEGREVKKLPTLRGRTIFTLFYENSTRTRSSFETAGKWMSADVINISASSSSVKKGESLKDTGLTLSAIGADAIIMRHPSSGAAQQLAGYVAPGGVGPSVINAGDGSHQHPTQALLDALTLRQRLGGIEGRKIVIVGDILHSRVVRSNVDLLSTLGAEVILVAPPTLLPYGVENWPVRTSYDMDAEIRDADAVMMLRVQQERMQGGFFPSHREYATLYGMSKAREASLKDSAIIMHPGPMLRGMEINFGVADAPRTAVLQQVSNGVHVRMAVLFALVAGSDATI</sequence>
<evidence type="ECO:0000255" key="1">
    <source>
        <dbReference type="HAMAP-Rule" id="MF_00001"/>
    </source>
</evidence>
<evidence type="ECO:0000305" key="2"/>